<protein>
    <recommendedName>
        <fullName evidence="1">ATP synthase epsilon chain</fullName>
    </recommendedName>
    <alternativeName>
        <fullName evidence="1">ATP synthase F1 sector epsilon subunit</fullName>
    </alternativeName>
    <alternativeName>
        <fullName evidence="1">F-ATPase epsilon subunit</fullName>
    </alternativeName>
</protein>
<feature type="chain" id="PRO_1000056511" description="ATP synthase epsilon chain">
    <location>
        <begin position="1"/>
        <end position="140"/>
    </location>
</feature>
<accession>A1KW10</accession>
<proteinExistence type="inferred from homology"/>
<evidence type="ECO:0000255" key="1">
    <source>
        <dbReference type="HAMAP-Rule" id="MF_00530"/>
    </source>
</evidence>
<reference key="1">
    <citation type="journal article" date="2007" name="PLoS Genet.">
        <title>Meningococcal genetic variation mechanisms viewed through comparative analysis of serogroup C strain FAM18.</title>
        <authorList>
            <person name="Bentley S.D."/>
            <person name="Vernikos G.S."/>
            <person name="Snyder L.A.S."/>
            <person name="Churcher C."/>
            <person name="Arrowsmith C."/>
            <person name="Chillingworth T."/>
            <person name="Cronin A."/>
            <person name="Davis P.H."/>
            <person name="Holroyd N.E."/>
            <person name="Jagels K."/>
            <person name="Maddison M."/>
            <person name="Moule S."/>
            <person name="Rabbinowitsch E."/>
            <person name="Sharp S."/>
            <person name="Unwin L."/>
            <person name="Whitehead S."/>
            <person name="Quail M.A."/>
            <person name="Achtman M."/>
            <person name="Barrell B.G."/>
            <person name="Saunders N.J."/>
            <person name="Parkhill J."/>
        </authorList>
    </citation>
    <scope>NUCLEOTIDE SEQUENCE [LARGE SCALE GENOMIC DNA]</scope>
    <source>
        <strain>ATCC 700532 / DSM 15464 / FAM18</strain>
    </source>
</reference>
<sequence length="140" mass="14933">MSIMQVEVVSSEQNIYSGEASFVVVPTVQGELGIYPRHEPIMSLVRPGALRLTVPGEDKEVLVAVSGGVLEVQPDKVTVLADVAVRSAEMDQARAEEAKKAAEAGISQAKDDKALAEAHKALAAAIAQLKTLDYIRSHKK</sequence>
<comment type="function">
    <text evidence="1">Produces ATP from ADP in the presence of a proton gradient across the membrane.</text>
</comment>
<comment type="subunit">
    <text evidence="1">F-type ATPases have 2 components, CF(1) - the catalytic core - and CF(0) - the membrane proton channel. CF(1) has five subunits: alpha(3), beta(3), gamma(1), delta(1), epsilon(1). CF(0) has three main subunits: a, b and c.</text>
</comment>
<comment type="subcellular location">
    <subcellularLocation>
        <location evidence="1">Cell inner membrane</location>
        <topology evidence="1">Peripheral membrane protein</topology>
    </subcellularLocation>
</comment>
<comment type="similarity">
    <text evidence="1">Belongs to the ATPase epsilon chain family.</text>
</comment>
<dbReference type="EMBL" id="AM421808">
    <property type="protein sequence ID" value="CAM11066.1"/>
    <property type="molecule type" value="Genomic_DNA"/>
</dbReference>
<dbReference type="RefSeq" id="WP_002221462.1">
    <property type="nucleotide sequence ID" value="NC_008767.1"/>
</dbReference>
<dbReference type="SMR" id="A1KW10"/>
<dbReference type="KEGG" id="nmc:NMC1905"/>
<dbReference type="HOGENOM" id="CLU_084338_2_0_4"/>
<dbReference type="Proteomes" id="UP000002286">
    <property type="component" value="Chromosome"/>
</dbReference>
<dbReference type="GO" id="GO:0005886">
    <property type="term" value="C:plasma membrane"/>
    <property type="evidence" value="ECO:0007669"/>
    <property type="project" value="UniProtKB-SubCell"/>
</dbReference>
<dbReference type="GO" id="GO:0045259">
    <property type="term" value="C:proton-transporting ATP synthase complex"/>
    <property type="evidence" value="ECO:0007669"/>
    <property type="project" value="UniProtKB-KW"/>
</dbReference>
<dbReference type="GO" id="GO:0005524">
    <property type="term" value="F:ATP binding"/>
    <property type="evidence" value="ECO:0007669"/>
    <property type="project" value="UniProtKB-UniRule"/>
</dbReference>
<dbReference type="GO" id="GO:0046933">
    <property type="term" value="F:proton-transporting ATP synthase activity, rotational mechanism"/>
    <property type="evidence" value="ECO:0007669"/>
    <property type="project" value="UniProtKB-UniRule"/>
</dbReference>
<dbReference type="CDD" id="cd12152">
    <property type="entry name" value="F1-ATPase_delta"/>
    <property type="match status" value="1"/>
</dbReference>
<dbReference type="FunFam" id="2.60.15.10:FF:000012">
    <property type="entry name" value="ATP synthase epsilon chain"/>
    <property type="match status" value="1"/>
</dbReference>
<dbReference type="Gene3D" id="2.60.15.10">
    <property type="entry name" value="F0F1 ATP synthase delta/epsilon subunit, N-terminal"/>
    <property type="match status" value="1"/>
</dbReference>
<dbReference type="HAMAP" id="MF_00530">
    <property type="entry name" value="ATP_synth_epsil_bac"/>
    <property type="match status" value="1"/>
</dbReference>
<dbReference type="InterPro" id="IPR036794">
    <property type="entry name" value="ATP_F1_dsu/esu_C_sf"/>
</dbReference>
<dbReference type="InterPro" id="IPR001469">
    <property type="entry name" value="ATP_synth_F1_dsu/esu"/>
</dbReference>
<dbReference type="InterPro" id="IPR020546">
    <property type="entry name" value="ATP_synth_F1_dsu/esu_N"/>
</dbReference>
<dbReference type="InterPro" id="IPR020547">
    <property type="entry name" value="ATP_synth_F1_esu_C"/>
</dbReference>
<dbReference type="InterPro" id="IPR036771">
    <property type="entry name" value="ATPsynth_dsu/esu_N"/>
</dbReference>
<dbReference type="NCBIfam" id="TIGR01216">
    <property type="entry name" value="ATP_synt_epsi"/>
    <property type="match status" value="1"/>
</dbReference>
<dbReference type="NCBIfam" id="NF001847">
    <property type="entry name" value="PRK00571.1-4"/>
    <property type="match status" value="1"/>
</dbReference>
<dbReference type="NCBIfam" id="NF009977">
    <property type="entry name" value="PRK13442.1"/>
    <property type="match status" value="1"/>
</dbReference>
<dbReference type="PANTHER" id="PTHR13822">
    <property type="entry name" value="ATP SYNTHASE DELTA/EPSILON CHAIN"/>
    <property type="match status" value="1"/>
</dbReference>
<dbReference type="PANTHER" id="PTHR13822:SF10">
    <property type="entry name" value="ATP SYNTHASE EPSILON CHAIN, CHLOROPLASTIC"/>
    <property type="match status" value="1"/>
</dbReference>
<dbReference type="Pfam" id="PF00401">
    <property type="entry name" value="ATP-synt_DE"/>
    <property type="match status" value="1"/>
</dbReference>
<dbReference type="Pfam" id="PF02823">
    <property type="entry name" value="ATP-synt_DE_N"/>
    <property type="match status" value="1"/>
</dbReference>
<dbReference type="SUPFAM" id="SSF46604">
    <property type="entry name" value="Epsilon subunit of F1F0-ATP synthase C-terminal domain"/>
    <property type="match status" value="1"/>
</dbReference>
<dbReference type="SUPFAM" id="SSF51344">
    <property type="entry name" value="Epsilon subunit of F1F0-ATP synthase N-terminal domain"/>
    <property type="match status" value="1"/>
</dbReference>
<name>ATPE_NEIMF</name>
<keyword id="KW-0066">ATP synthesis</keyword>
<keyword id="KW-0997">Cell inner membrane</keyword>
<keyword id="KW-1003">Cell membrane</keyword>
<keyword id="KW-0139">CF(1)</keyword>
<keyword id="KW-0375">Hydrogen ion transport</keyword>
<keyword id="KW-0406">Ion transport</keyword>
<keyword id="KW-0472">Membrane</keyword>
<keyword id="KW-0813">Transport</keyword>
<organism>
    <name type="scientific">Neisseria meningitidis serogroup C / serotype 2a (strain ATCC 700532 / DSM 15464 / FAM18)</name>
    <dbReference type="NCBI Taxonomy" id="272831"/>
    <lineage>
        <taxon>Bacteria</taxon>
        <taxon>Pseudomonadati</taxon>
        <taxon>Pseudomonadota</taxon>
        <taxon>Betaproteobacteria</taxon>
        <taxon>Neisseriales</taxon>
        <taxon>Neisseriaceae</taxon>
        <taxon>Neisseria</taxon>
    </lineage>
</organism>
<gene>
    <name evidence="1" type="primary">atpC</name>
    <name type="ordered locus">NMC1905</name>
</gene>